<organism>
    <name type="scientific">Clostridium perfringens (strain 13 / Type A)</name>
    <dbReference type="NCBI Taxonomy" id="195102"/>
    <lineage>
        <taxon>Bacteria</taxon>
        <taxon>Bacillati</taxon>
        <taxon>Bacillota</taxon>
        <taxon>Clostridia</taxon>
        <taxon>Eubacteriales</taxon>
        <taxon>Clostridiaceae</taxon>
        <taxon>Clostridium</taxon>
    </lineage>
</organism>
<name>IOLC_CLOPE</name>
<gene>
    <name evidence="1" type="primary">iolC</name>
    <name type="ordered locus">CPE0087</name>
</gene>
<sequence>MRYIEFDEKRKFDIVPVGRVAIDFNPTDIHKPLSESRNFNKYLGGSPANIAVGLARLGKKVGFIGKVSDDRFGEFVVNYFKKEGIDVSEISKAKNGESLGLTFTEILSPTESSILMYRNGIADLQLDVDDIDEDYIKNTKAIVISGTALAMSPSREAALKALRLAKKNGTVVIFDVDYREYNWKNKDEIAIYYSIVGKESDIIMGSREEFDLMEGLIAKDSTDEETAKRWLDYGNKIVVIKHGKDGSTAYTRDGKAYRIKPFPVKLLKSFGGGDAYASAFIYGILEGWDMMDALEFGSASAAMLVASHSCSEDMPTVEAIKEFIKKEKEEYGEMVARS</sequence>
<protein>
    <recommendedName>
        <fullName evidence="1">5-dehydro-2-deoxygluconokinase</fullName>
        <ecNumber evidence="1">2.7.1.92</ecNumber>
    </recommendedName>
    <alternativeName>
        <fullName evidence="1">2-deoxy-5-keto-D-gluconate kinase</fullName>
        <shortName evidence="1">DKG kinase</shortName>
    </alternativeName>
</protein>
<comment type="function">
    <text evidence="1">Catalyzes the phosphorylation of 5-dehydro-2-deoxy-D-gluconate (2-deoxy-5-keto-D-gluconate or DKG) to 6-phospho-5-dehydro-2-deoxy-D-gluconate (DKGP).</text>
</comment>
<comment type="catalytic activity">
    <reaction evidence="1">
        <text>5-dehydro-2-deoxy-D-gluconate + ATP = 6-phospho-5-dehydro-2-deoxy-D-gluconate + ADP + H(+)</text>
        <dbReference type="Rhea" id="RHEA:13497"/>
        <dbReference type="ChEBI" id="CHEBI:15378"/>
        <dbReference type="ChEBI" id="CHEBI:16669"/>
        <dbReference type="ChEBI" id="CHEBI:30616"/>
        <dbReference type="ChEBI" id="CHEBI:57949"/>
        <dbReference type="ChEBI" id="CHEBI:456216"/>
        <dbReference type="EC" id="2.7.1.92"/>
    </reaction>
</comment>
<comment type="pathway">
    <text evidence="1">Polyol metabolism; myo-inositol degradation into acetyl-CoA; acetyl-CoA from myo-inositol: step 5/7.</text>
</comment>
<comment type="similarity">
    <text evidence="1">Belongs to the carbohydrate kinase PfkB family.</text>
</comment>
<feature type="chain" id="PRO_0000352296" description="5-dehydro-2-deoxygluconokinase">
    <location>
        <begin position="1"/>
        <end position="338"/>
    </location>
</feature>
<keyword id="KW-0067">ATP-binding</keyword>
<keyword id="KW-0418">Kinase</keyword>
<keyword id="KW-0547">Nucleotide-binding</keyword>
<keyword id="KW-1185">Reference proteome</keyword>
<keyword id="KW-0808">Transferase</keyword>
<proteinExistence type="inferred from homology"/>
<dbReference type="EC" id="2.7.1.92" evidence="1"/>
<dbReference type="EMBL" id="BA000016">
    <property type="protein sequence ID" value="BAB79793.1"/>
    <property type="molecule type" value="Genomic_DNA"/>
</dbReference>
<dbReference type="RefSeq" id="WP_003448561.1">
    <property type="nucleotide sequence ID" value="NC_003366.1"/>
</dbReference>
<dbReference type="SMR" id="Q8XP78"/>
<dbReference type="STRING" id="195102.gene:10489331"/>
<dbReference type="GeneID" id="93000607"/>
<dbReference type="KEGG" id="cpe:CPE0087"/>
<dbReference type="HOGENOM" id="CLU_027634_6_0_9"/>
<dbReference type="UniPathway" id="UPA00076">
    <property type="reaction ID" value="UER00146"/>
</dbReference>
<dbReference type="Proteomes" id="UP000000818">
    <property type="component" value="Chromosome"/>
</dbReference>
<dbReference type="GO" id="GO:0047590">
    <property type="term" value="F:5-dehydro-2-deoxygluconokinase activity"/>
    <property type="evidence" value="ECO:0007669"/>
    <property type="project" value="UniProtKB-UniRule"/>
</dbReference>
<dbReference type="GO" id="GO:0005524">
    <property type="term" value="F:ATP binding"/>
    <property type="evidence" value="ECO:0007669"/>
    <property type="project" value="UniProtKB-UniRule"/>
</dbReference>
<dbReference type="GO" id="GO:0019310">
    <property type="term" value="P:inositol catabolic process"/>
    <property type="evidence" value="ECO:0007669"/>
    <property type="project" value="UniProtKB-UniRule"/>
</dbReference>
<dbReference type="CDD" id="cd01166">
    <property type="entry name" value="KdgK"/>
    <property type="match status" value="1"/>
</dbReference>
<dbReference type="Gene3D" id="3.40.1190.20">
    <property type="match status" value="1"/>
</dbReference>
<dbReference type="Gene3D" id="2.20.150.10">
    <property type="entry name" value="putative 5-dehydro-2- deoxygluconokinase"/>
    <property type="match status" value="1"/>
</dbReference>
<dbReference type="HAMAP" id="MF_01668">
    <property type="entry name" value="IolC"/>
    <property type="match status" value="1"/>
</dbReference>
<dbReference type="InterPro" id="IPR002173">
    <property type="entry name" value="Carboh/pur_kinase_PfkB_CS"/>
</dbReference>
<dbReference type="InterPro" id="IPR022841">
    <property type="entry name" value="DKG_kinase_firmi"/>
</dbReference>
<dbReference type="InterPro" id="IPR030830">
    <property type="entry name" value="Myo_inos_IolC"/>
</dbReference>
<dbReference type="InterPro" id="IPR023314">
    <property type="entry name" value="Myo_inos_IolC-like_sf"/>
</dbReference>
<dbReference type="InterPro" id="IPR050306">
    <property type="entry name" value="PfkB_Carbo_kinase"/>
</dbReference>
<dbReference type="InterPro" id="IPR011611">
    <property type="entry name" value="PfkB_dom"/>
</dbReference>
<dbReference type="InterPro" id="IPR029056">
    <property type="entry name" value="Ribokinase-like"/>
</dbReference>
<dbReference type="NCBIfam" id="TIGR04382">
    <property type="entry name" value="myo_inos_iolC_N"/>
    <property type="match status" value="1"/>
</dbReference>
<dbReference type="PANTHER" id="PTHR43085:SF49">
    <property type="entry name" value="5-DEHYDRO-2-DEOXYGLUCONOKINASE"/>
    <property type="match status" value="1"/>
</dbReference>
<dbReference type="PANTHER" id="PTHR43085">
    <property type="entry name" value="HEXOKINASE FAMILY MEMBER"/>
    <property type="match status" value="1"/>
</dbReference>
<dbReference type="Pfam" id="PF00294">
    <property type="entry name" value="PfkB"/>
    <property type="match status" value="1"/>
</dbReference>
<dbReference type="SUPFAM" id="SSF53613">
    <property type="entry name" value="Ribokinase-like"/>
    <property type="match status" value="1"/>
</dbReference>
<dbReference type="PROSITE" id="PS00584">
    <property type="entry name" value="PFKB_KINASES_2"/>
    <property type="match status" value="1"/>
</dbReference>
<evidence type="ECO:0000255" key="1">
    <source>
        <dbReference type="HAMAP-Rule" id="MF_01668"/>
    </source>
</evidence>
<accession>Q8XP78</accession>
<reference key="1">
    <citation type="journal article" date="2002" name="Proc. Natl. Acad. Sci. U.S.A.">
        <title>Complete genome sequence of Clostridium perfringens, an anaerobic flesh-eater.</title>
        <authorList>
            <person name="Shimizu T."/>
            <person name="Ohtani K."/>
            <person name="Hirakawa H."/>
            <person name="Ohshima K."/>
            <person name="Yamashita A."/>
            <person name="Shiba T."/>
            <person name="Ogasawara N."/>
            <person name="Hattori M."/>
            <person name="Kuhara S."/>
            <person name="Hayashi H."/>
        </authorList>
    </citation>
    <scope>NUCLEOTIDE SEQUENCE [LARGE SCALE GENOMIC DNA]</scope>
    <source>
        <strain>13 / Type A</strain>
    </source>
</reference>